<protein>
    <recommendedName>
        <fullName evidence="1">Triosephosphate isomerase</fullName>
        <shortName evidence="1">TIM</shortName>
        <shortName evidence="1">TPI</shortName>
        <ecNumber evidence="1">5.3.1.1</ecNumber>
    </recommendedName>
    <alternativeName>
        <fullName evidence="1">Triose-phosphate isomerase</fullName>
    </alternativeName>
</protein>
<name>TPIS_STREM</name>
<accession>B4U3U0</accession>
<gene>
    <name evidence="1" type="primary">tpiA</name>
    <name type="ordered locus">Sez_1321</name>
</gene>
<reference key="1">
    <citation type="journal article" date="2008" name="PLoS ONE">
        <title>Genome sequence of a lancefield group C Streptococcus zooepidemicus strain causing epidemic nephritis: new information about an old disease.</title>
        <authorList>
            <person name="Beres S.B."/>
            <person name="Sesso R."/>
            <person name="Pinto S.W.L."/>
            <person name="Hoe N.P."/>
            <person name="Porcella S.F."/>
            <person name="Deleo F.R."/>
            <person name="Musser J.M."/>
        </authorList>
    </citation>
    <scope>NUCLEOTIDE SEQUENCE [LARGE SCALE GENOMIC DNA]</scope>
    <source>
        <strain>MGCS10565</strain>
    </source>
</reference>
<proteinExistence type="inferred from homology"/>
<dbReference type="EC" id="5.3.1.1" evidence="1"/>
<dbReference type="EMBL" id="CP001129">
    <property type="protein sequence ID" value="ACG62657.1"/>
    <property type="molecule type" value="Genomic_DNA"/>
</dbReference>
<dbReference type="RefSeq" id="WP_012515922.1">
    <property type="nucleotide sequence ID" value="NC_011134.1"/>
</dbReference>
<dbReference type="SMR" id="B4U3U0"/>
<dbReference type="KEGG" id="sez:Sez_1321"/>
<dbReference type="PATRIC" id="fig|40041.11.peg.685"/>
<dbReference type="HOGENOM" id="CLU_024251_2_3_9"/>
<dbReference type="UniPathway" id="UPA00109">
    <property type="reaction ID" value="UER00189"/>
</dbReference>
<dbReference type="UniPathway" id="UPA00138"/>
<dbReference type="Proteomes" id="UP000001873">
    <property type="component" value="Chromosome"/>
</dbReference>
<dbReference type="GO" id="GO:0005829">
    <property type="term" value="C:cytosol"/>
    <property type="evidence" value="ECO:0007669"/>
    <property type="project" value="TreeGrafter"/>
</dbReference>
<dbReference type="GO" id="GO:0004807">
    <property type="term" value="F:triose-phosphate isomerase activity"/>
    <property type="evidence" value="ECO:0007669"/>
    <property type="project" value="UniProtKB-UniRule"/>
</dbReference>
<dbReference type="GO" id="GO:0006094">
    <property type="term" value="P:gluconeogenesis"/>
    <property type="evidence" value="ECO:0007669"/>
    <property type="project" value="UniProtKB-UniRule"/>
</dbReference>
<dbReference type="GO" id="GO:0046166">
    <property type="term" value="P:glyceraldehyde-3-phosphate biosynthetic process"/>
    <property type="evidence" value="ECO:0007669"/>
    <property type="project" value="TreeGrafter"/>
</dbReference>
<dbReference type="GO" id="GO:0019563">
    <property type="term" value="P:glycerol catabolic process"/>
    <property type="evidence" value="ECO:0007669"/>
    <property type="project" value="TreeGrafter"/>
</dbReference>
<dbReference type="GO" id="GO:0006096">
    <property type="term" value="P:glycolytic process"/>
    <property type="evidence" value="ECO:0007669"/>
    <property type="project" value="UniProtKB-UniRule"/>
</dbReference>
<dbReference type="CDD" id="cd00311">
    <property type="entry name" value="TIM"/>
    <property type="match status" value="1"/>
</dbReference>
<dbReference type="FunFam" id="3.20.20.70:FF:000016">
    <property type="entry name" value="Triosephosphate isomerase"/>
    <property type="match status" value="1"/>
</dbReference>
<dbReference type="Gene3D" id="3.20.20.70">
    <property type="entry name" value="Aldolase class I"/>
    <property type="match status" value="1"/>
</dbReference>
<dbReference type="HAMAP" id="MF_00147_B">
    <property type="entry name" value="TIM_B"/>
    <property type="match status" value="1"/>
</dbReference>
<dbReference type="InterPro" id="IPR013785">
    <property type="entry name" value="Aldolase_TIM"/>
</dbReference>
<dbReference type="InterPro" id="IPR035990">
    <property type="entry name" value="TIM_sf"/>
</dbReference>
<dbReference type="InterPro" id="IPR022896">
    <property type="entry name" value="TrioseP_Isoase_bac/euk"/>
</dbReference>
<dbReference type="InterPro" id="IPR000652">
    <property type="entry name" value="Triosephosphate_isomerase"/>
</dbReference>
<dbReference type="InterPro" id="IPR020861">
    <property type="entry name" value="Triosephosphate_isomerase_AS"/>
</dbReference>
<dbReference type="NCBIfam" id="TIGR00419">
    <property type="entry name" value="tim"/>
    <property type="match status" value="1"/>
</dbReference>
<dbReference type="PANTHER" id="PTHR21139">
    <property type="entry name" value="TRIOSEPHOSPHATE ISOMERASE"/>
    <property type="match status" value="1"/>
</dbReference>
<dbReference type="PANTHER" id="PTHR21139:SF42">
    <property type="entry name" value="TRIOSEPHOSPHATE ISOMERASE"/>
    <property type="match status" value="1"/>
</dbReference>
<dbReference type="Pfam" id="PF00121">
    <property type="entry name" value="TIM"/>
    <property type="match status" value="1"/>
</dbReference>
<dbReference type="SUPFAM" id="SSF51351">
    <property type="entry name" value="Triosephosphate isomerase (TIM)"/>
    <property type="match status" value="1"/>
</dbReference>
<dbReference type="PROSITE" id="PS00171">
    <property type="entry name" value="TIM_1"/>
    <property type="match status" value="1"/>
</dbReference>
<dbReference type="PROSITE" id="PS51440">
    <property type="entry name" value="TIM_2"/>
    <property type="match status" value="1"/>
</dbReference>
<organism>
    <name type="scientific">Streptococcus equi subsp. zooepidemicus (strain MGCS10565)</name>
    <dbReference type="NCBI Taxonomy" id="552526"/>
    <lineage>
        <taxon>Bacteria</taxon>
        <taxon>Bacillati</taxon>
        <taxon>Bacillota</taxon>
        <taxon>Bacilli</taxon>
        <taxon>Lactobacillales</taxon>
        <taxon>Streptococcaceae</taxon>
        <taxon>Streptococcus</taxon>
    </lineage>
</organism>
<sequence>MSRKPIIAGNWKMNKNPQEAKAFVEAVVSKLPSNDLVDVAVAAPAVDLVTTIEAAKDSVLKVAAQNCYFENSGAYTGETSPKVLADMGADYVVIGHSERRDYFHETDEDINKKAKAIFANGLTPIICCGESLETYEAGQAVAFVGAQVSAALEGLSAEQVASLVLAYEPIWAIGTGKSATQEDAQSMCKAVRDVVAADFGQEVADKVRVQYGGSVKPENIKEYMACPDVDGALVGGASLEADSFLALLDFVN</sequence>
<feature type="chain" id="PRO_1000096535" description="Triosephosphate isomerase">
    <location>
        <begin position="1"/>
        <end position="252"/>
    </location>
</feature>
<feature type="active site" description="Electrophile" evidence="1">
    <location>
        <position position="96"/>
    </location>
</feature>
<feature type="active site" description="Proton acceptor" evidence="1">
    <location>
        <position position="168"/>
    </location>
</feature>
<feature type="binding site" evidence="1">
    <location>
        <begin position="10"/>
        <end position="12"/>
    </location>
    <ligand>
        <name>substrate</name>
    </ligand>
</feature>
<feature type="binding site" evidence="1">
    <location>
        <position position="174"/>
    </location>
    <ligand>
        <name>substrate</name>
    </ligand>
</feature>
<feature type="binding site" evidence="1">
    <location>
        <position position="214"/>
    </location>
    <ligand>
        <name>substrate</name>
    </ligand>
</feature>
<feature type="binding site" evidence="1">
    <location>
        <begin position="235"/>
        <end position="236"/>
    </location>
    <ligand>
        <name>substrate</name>
    </ligand>
</feature>
<keyword id="KW-0963">Cytoplasm</keyword>
<keyword id="KW-0312">Gluconeogenesis</keyword>
<keyword id="KW-0324">Glycolysis</keyword>
<keyword id="KW-0413">Isomerase</keyword>
<evidence type="ECO:0000255" key="1">
    <source>
        <dbReference type="HAMAP-Rule" id="MF_00147"/>
    </source>
</evidence>
<comment type="function">
    <text evidence="1">Involved in the gluconeogenesis. Catalyzes stereospecifically the conversion of dihydroxyacetone phosphate (DHAP) to D-glyceraldehyde-3-phosphate (G3P).</text>
</comment>
<comment type="catalytic activity">
    <reaction evidence="1">
        <text>D-glyceraldehyde 3-phosphate = dihydroxyacetone phosphate</text>
        <dbReference type="Rhea" id="RHEA:18585"/>
        <dbReference type="ChEBI" id="CHEBI:57642"/>
        <dbReference type="ChEBI" id="CHEBI:59776"/>
        <dbReference type="EC" id="5.3.1.1"/>
    </reaction>
</comment>
<comment type="pathway">
    <text evidence="1">Carbohydrate biosynthesis; gluconeogenesis.</text>
</comment>
<comment type="pathway">
    <text evidence="1">Carbohydrate degradation; glycolysis; D-glyceraldehyde 3-phosphate from glycerone phosphate: step 1/1.</text>
</comment>
<comment type="subunit">
    <text evidence="1">Homodimer.</text>
</comment>
<comment type="subcellular location">
    <subcellularLocation>
        <location evidence="1">Cytoplasm</location>
    </subcellularLocation>
</comment>
<comment type="similarity">
    <text evidence="1">Belongs to the triosephosphate isomerase family.</text>
</comment>